<reference key="1">
    <citation type="journal article" date="2004" name="J. Bacteriol.">
        <title>Complete genome sequence of Rickettsia typhi and comparison with sequences of other Rickettsiae.</title>
        <authorList>
            <person name="McLeod M.P."/>
            <person name="Qin X."/>
            <person name="Karpathy S.E."/>
            <person name="Gioia J."/>
            <person name="Highlander S.K."/>
            <person name="Fox G.E."/>
            <person name="McNeill T.Z."/>
            <person name="Jiang H."/>
            <person name="Muzny D."/>
            <person name="Jacob L.S."/>
            <person name="Hawes A.C."/>
            <person name="Sodergren E."/>
            <person name="Gill R."/>
            <person name="Hume J."/>
            <person name="Morgan M."/>
            <person name="Fan G."/>
            <person name="Amin A.G."/>
            <person name="Gibbs R.A."/>
            <person name="Hong C."/>
            <person name="Yu X.-J."/>
            <person name="Walker D.H."/>
            <person name="Weinstock G.M."/>
        </authorList>
    </citation>
    <scope>NUCLEOTIDE SEQUENCE [LARGE SCALE GENOMIC DNA]</scope>
    <source>
        <strain>ATCC VR-144 / Wilmington</strain>
    </source>
</reference>
<feature type="chain" id="PRO_0000059700" description="UDP-3-O-acylglucosamine N-acyltransferase">
    <location>
        <begin position="1"/>
        <end position="346"/>
    </location>
</feature>
<feature type="active site" description="Proton acceptor" evidence="1">
    <location>
        <position position="253"/>
    </location>
</feature>
<evidence type="ECO:0000255" key="1">
    <source>
        <dbReference type="HAMAP-Rule" id="MF_00523"/>
    </source>
</evidence>
<name>LPXD_RICTY</name>
<sequence length="346" mass="37251">MVSSNFYKNLGPRKLTAIIDFLHDIIEPTKIHEDIDIHDIKILQEASPNDISFLSNPKYSEFLKTTKAAACIVPKDFTEESNQNTVLIHAENSYFAYSKLIDFFYAPIKSYSTKIMKSAIIADSAAIGKNCYIGHNVVIEDDVIIGDNSIIDAGTFIGRGVNIGKNARIEQHVSINYAIIGDDVVILVGAKIGQDGFGFATEKGVHNKIFHIGIVKIGNNVEIGSNTTIDRGALQDTIIEDLCRIDNLVQIGHGVKIGKGSIIVAQAGIAGSSAIGKYCALGGQVGIAGHLNIGDRTQVAAQGGVAQNIEEGKIVGGSPAVPIMDWHRQSIIMKQLVKTSNNKLKK</sequence>
<proteinExistence type="inferred from homology"/>
<keyword id="KW-0012">Acyltransferase</keyword>
<keyword id="KW-0441">Lipid A biosynthesis</keyword>
<keyword id="KW-0444">Lipid biosynthesis</keyword>
<keyword id="KW-0443">Lipid metabolism</keyword>
<keyword id="KW-0677">Repeat</keyword>
<keyword id="KW-0808">Transferase</keyword>
<comment type="function">
    <text evidence="1">Catalyzes the N-acylation of UDP-3-O-acylglucosamine using 3-hydroxyacyl-ACP as the acyl donor. Is involved in the biosynthesis of lipid A, a phosphorylated glycolipid that anchors the lipopolysaccharide to the outer membrane of the cell.</text>
</comment>
<comment type="catalytic activity">
    <reaction evidence="1">
        <text>a UDP-3-O-[(3R)-3-hydroxyacyl]-alpha-D-glucosamine + a (3R)-hydroxyacyl-[ACP] = a UDP-2-N,3-O-bis[(3R)-3-hydroxyacyl]-alpha-D-glucosamine + holo-[ACP] + H(+)</text>
        <dbReference type="Rhea" id="RHEA:53836"/>
        <dbReference type="Rhea" id="RHEA-COMP:9685"/>
        <dbReference type="Rhea" id="RHEA-COMP:9945"/>
        <dbReference type="ChEBI" id="CHEBI:15378"/>
        <dbReference type="ChEBI" id="CHEBI:64479"/>
        <dbReference type="ChEBI" id="CHEBI:78827"/>
        <dbReference type="ChEBI" id="CHEBI:137740"/>
        <dbReference type="ChEBI" id="CHEBI:137748"/>
        <dbReference type="EC" id="2.3.1.191"/>
    </reaction>
</comment>
<comment type="pathway">
    <text evidence="1">Bacterial outer membrane biogenesis; LPS lipid A biosynthesis.</text>
</comment>
<comment type="subunit">
    <text evidence="1">Homotrimer.</text>
</comment>
<comment type="similarity">
    <text evidence="1">Belongs to the transferase hexapeptide repeat family. LpxD subfamily.</text>
</comment>
<gene>
    <name evidence="1" type="primary">lpxD</name>
    <name type="ordered locus">RT0008</name>
</gene>
<accession>Q68XZ4</accession>
<dbReference type="EC" id="2.3.1.191" evidence="1"/>
<dbReference type="EMBL" id="AE017197">
    <property type="protein sequence ID" value="AAU03498.1"/>
    <property type="molecule type" value="Genomic_DNA"/>
</dbReference>
<dbReference type="RefSeq" id="WP_011190485.1">
    <property type="nucleotide sequence ID" value="NC_006142.1"/>
</dbReference>
<dbReference type="SMR" id="Q68XZ4"/>
<dbReference type="KEGG" id="rty:RT0008"/>
<dbReference type="eggNOG" id="COG1044">
    <property type="taxonomic scope" value="Bacteria"/>
</dbReference>
<dbReference type="HOGENOM" id="CLU_049865_0_0_5"/>
<dbReference type="OrthoDB" id="9784739at2"/>
<dbReference type="UniPathway" id="UPA00973"/>
<dbReference type="Proteomes" id="UP000000604">
    <property type="component" value="Chromosome"/>
</dbReference>
<dbReference type="GO" id="GO:0016020">
    <property type="term" value="C:membrane"/>
    <property type="evidence" value="ECO:0007669"/>
    <property type="project" value="GOC"/>
</dbReference>
<dbReference type="GO" id="GO:0016410">
    <property type="term" value="F:N-acyltransferase activity"/>
    <property type="evidence" value="ECO:0007669"/>
    <property type="project" value="InterPro"/>
</dbReference>
<dbReference type="GO" id="GO:0009245">
    <property type="term" value="P:lipid A biosynthetic process"/>
    <property type="evidence" value="ECO:0007669"/>
    <property type="project" value="UniProtKB-UniRule"/>
</dbReference>
<dbReference type="CDD" id="cd03352">
    <property type="entry name" value="LbH_LpxD"/>
    <property type="match status" value="1"/>
</dbReference>
<dbReference type="Gene3D" id="2.160.10.10">
    <property type="entry name" value="Hexapeptide repeat proteins"/>
    <property type="match status" value="1"/>
</dbReference>
<dbReference type="Gene3D" id="3.40.1390.10">
    <property type="entry name" value="MurE/MurF, N-terminal domain"/>
    <property type="match status" value="1"/>
</dbReference>
<dbReference type="HAMAP" id="MF_00523">
    <property type="entry name" value="LpxD"/>
    <property type="match status" value="1"/>
</dbReference>
<dbReference type="InterPro" id="IPR001451">
    <property type="entry name" value="Hexapep"/>
</dbReference>
<dbReference type="InterPro" id="IPR018357">
    <property type="entry name" value="Hexapep_transf_CS"/>
</dbReference>
<dbReference type="InterPro" id="IPR007691">
    <property type="entry name" value="LpxD"/>
</dbReference>
<dbReference type="InterPro" id="IPR011004">
    <property type="entry name" value="Trimer_LpxA-like_sf"/>
</dbReference>
<dbReference type="InterPro" id="IPR020573">
    <property type="entry name" value="UDP_GlcNAc_AcTrfase_non-rep"/>
</dbReference>
<dbReference type="NCBIfam" id="TIGR01853">
    <property type="entry name" value="lipid_A_lpxD"/>
    <property type="match status" value="1"/>
</dbReference>
<dbReference type="NCBIfam" id="NF002060">
    <property type="entry name" value="PRK00892.1"/>
    <property type="match status" value="1"/>
</dbReference>
<dbReference type="PANTHER" id="PTHR43378">
    <property type="entry name" value="UDP-3-O-ACYLGLUCOSAMINE N-ACYLTRANSFERASE"/>
    <property type="match status" value="1"/>
</dbReference>
<dbReference type="PANTHER" id="PTHR43378:SF2">
    <property type="entry name" value="UDP-3-O-ACYLGLUCOSAMINE N-ACYLTRANSFERASE 1, MITOCHONDRIAL-RELATED"/>
    <property type="match status" value="1"/>
</dbReference>
<dbReference type="Pfam" id="PF00132">
    <property type="entry name" value="Hexapep"/>
    <property type="match status" value="2"/>
</dbReference>
<dbReference type="Pfam" id="PF04613">
    <property type="entry name" value="LpxD"/>
    <property type="match status" value="1"/>
</dbReference>
<dbReference type="SUPFAM" id="SSF51161">
    <property type="entry name" value="Trimeric LpxA-like enzymes"/>
    <property type="match status" value="1"/>
</dbReference>
<dbReference type="PROSITE" id="PS00101">
    <property type="entry name" value="HEXAPEP_TRANSFERASES"/>
    <property type="match status" value="2"/>
</dbReference>
<protein>
    <recommendedName>
        <fullName evidence="1">UDP-3-O-acylglucosamine N-acyltransferase</fullName>
        <ecNumber evidence="1">2.3.1.191</ecNumber>
    </recommendedName>
</protein>
<organism>
    <name type="scientific">Rickettsia typhi (strain ATCC VR-144 / Wilmington)</name>
    <dbReference type="NCBI Taxonomy" id="257363"/>
    <lineage>
        <taxon>Bacteria</taxon>
        <taxon>Pseudomonadati</taxon>
        <taxon>Pseudomonadota</taxon>
        <taxon>Alphaproteobacteria</taxon>
        <taxon>Rickettsiales</taxon>
        <taxon>Rickettsiaceae</taxon>
        <taxon>Rickettsieae</taxon>
        <taxon>Rickettsia</taxon>
        <taxon>typhus group</taxon>
    </lineage>
</organism>